<dbReference type="EMBL" id="L42023">
    <property type="protein sequence ID" value="AAC23167.1"/>
    <property type="molecule type" value="Genomic_DNA"/>
</dbReference>
<dbReference type="PIR" id="C64034">
    <property type="entry name" value="C64034"/>
</dbReference>
<dbReference type="RefSeq" id="NP_439664.1">
    <property type="nucleotide sequence ID" value="NC_000907.1"/>
</dbReference>
<dbReference type="SMR" id="P44236"/>
<dbReference type="STRING" id="71421.HI_1514"/>
<dbReference type="EnsemblBacteria" id="AAC23167">
    <property type="protein sequence ID" value="AAC23167"/>
    <property type="gene ID" value="HI_1514"/>
</dbReference>
<dbReference type="KEGG" id="hin:HI_1514"/>
<dbReference type="PATRIC" id="fig|71421.8.peg.1584"/>
<dbReference type="eggNOG" id="COG3941">
    <property type="taxonomic scope" value="Bacteria"/>
</dbReference>
<dbReference type="HOGENOM" id="CLU_433309_0_0_6"/>
<dbReference type="OrthoDB" id="371379at2"/>
<dbReference type="BioCyc" id="HINF71421:G1GJ1-1537-MONOMER"/>
<dbReference type="Proteomes" id="UP000000579">
    <property type="component" value="Chromosome"/>
</dbReference>
<dbReference type="GO" id="GO:0005886">
    <property type="term" value="C:plasma membrane"/>
    <property type="evidence" value="ECO:0007669"/>
    <property type="project" value="UniProtKB-SubCell"/>
</dbReference>
<dbReference type="InterPro" id="IPR039567">
    <property type="entry name" value="Gly-zipper"/>
</dbReference>
<dbReference type="InterPro" id="IPR053058">
    <property type="entry name" value="Mulikevirus_tape_measure"/>
</dbReference>
<dbReference type="InterPro" id="IPR013491">
    <property type="entry name" value="Tape_meas_N"/>
</dbReference>
<dbReference type="NCBIfam" id="TIGR02675">
    <property type="entry name" value="tape_meas_nterm"/>
    <property type="match status" value="1"/>
</dbReference>
<dbReference type="PANTHER" id="PTHR38812">
    <property type="entry name" value="MU-LIKE PROPHAGE FLUMU PROTEIN GP42"/>
    <property type="match status" value="1"/>
</dbReference>
<dbReference type="PANTHER" id="PTHR38812:SF2">
    <property type="entry name" value="MU-LIKE PROPHAGE FLUMU PROTEIN GP42"/>
    <property type="match status" value="1"/>
</dbReference>
<dbReference type="Pfam" id="PF13488">
    <property type="entry name" value="Gly-zipper_Omp"/>
    <property type="match status" value="1"/>
</dbReference>
<dbReference type="Pfam" id="PF20155">
    <property type="entry name" value="TMP_3"/>
    <property type="match status" value="1"/>
</dbReference>
<protein>
    <recommendedName>
        <fullName>Mu-like prophage FluMu protein gp42</fullName>
    </recommendedName>
</protein>
<feature type="chain" id="PRO_0000077837" description="Mu-like prophage FluMu protein gp42">
    <location>
        <begin position="1"/>
        <end position="631"/>
    </location>
</feature>
<feature type="transmembrane region" description="Helical" evidence="1">
    <location>
        <begin position="56"/>
        <end position="76"/>
    </location>
</feature>
<feature type="transmembrane region" description="Helical" evidence="1">
    <location>
        <begin position="385"/>
        <end position="405"/>
    </location>
</feature>
<feature type="transmembrane region" description="Helical" evidence="1">
    <location>
        <begin position="455"/>
        <end position="475"/>
    </location>
</feature>
<feature type="transmembrane region" description="Helical" evidence="1">
    <location>
        <begin position="495"/>
        <end position="515"/>
    </location>
</feature>
<feature type="transmembrane region" description="Helical" evidence="1">
    <location>
        <begin position="543"/>
        <end position="563"/>
    </location>
</feature>
<feature type="region of interest" description="Disordered" evidence="2">
    <location>
        <begin position="425"/>
        <end position="453"/>
    </location>
</feature>
<feature type="compositionally biased region" description="Basic residues" evidence="2">
    <location>
        <begin position="434"/>
        <end position="449"/>
    </location>
</feature>
<gene>
    <name type="ordered locus">HI_1514</name>
</gene>
<comment type="subcellular location">
    <subcellularLocation>
        <location evidence="3">Cell membrane</location>
        <topology evidence="3">Multi-pass membrane protein</topology>
    </subcellularLocation>
</comment>
<comment type="similarity">
    <text evidence="3">To phage Mu protein gp42.</text>
</comment>
<organism>
    <name type="scientific">Haemophilus influenzae (strain ATCC 51907 / DSM 11121 / KW20 / Rd)</name>
    <dbReference type="NCBI Taxonomy" id="71421"/>
    <lineage>
        <taxon>Bacteria</taxon>
        <taxon>Pseudomonadati</taxon>
        <taxon>Pseudomonadota</taxon>
        <taxon>Gammaproteobacteria</taxon>
        <taxon>Pasteurellales</taxon>
        <taxon>Pasteurellaceae</taxon>
        <taxon>Haemophilus</taxon>
    </lineage>
</organism>
<sequence length="631" mass="66208">MMANNSTSFFVNLAGNVSQQAARFSNSIANMANKNVSSLNKVSRAISAVSKGFNGLGNITIPIIGVGAAAGATMVGKSMLRTAADFEMAKIRMKQTFGEQGEAADAWLKKFATDTPMAFADTQDAMMRLKTAGIDPMNGSLQALVDYNAKVGGDKANLDGYISAISKGFIKGKLSMEEINPLLERNVKVFEILAKETGGKYTADQMQKMLQEGKLGRKAIHALLRGMGRDAQGAAKEQMKTWDGLVSNLEDTWTSMQARFMEHGAFDALKKELGDFVEWLNEKIDDGTLDDFPKTVSDTLIEALKNLKEMAKDVKPVLESIGSVMSWVSEKAGGYGNLAKFMGALYLGNKVLRNDKVQTLGGWGWSGAKWGYNKIFNRKKGGAGGLADGVAGALGATVGVTPVYVTNFPMGFGGGGGGGYGYDVIEDGRDKDKKTQKKNKPPRPKRGRGSVRSPVAAVAASAAAVPKVAAPVTTASSGVARSVGNGVKSLGRGASKAVPYLGTGLAVAEGVTVLMDDTTNTKEKSEAIGSIAGATAGAIVGQALIPIPVVGAAVGSYLGGWLGEWLGSEVGEYLSDPEPIKNELNGTINIAVKASDQLIATATQAKIQTNQQRDSLETAVQMGTLGMGGMW</sequence>
<name>VG42_HAEIN</name>
<reference key="1">
    <citation type="journal article" date="1995" name="Science">
        <title>Whole-genome random sequencing and assembly of Haemophilus influenzae Rd.</title>
        <authorList>
            <person name="Fleischmann R.D."/>
            <person name="Adams M.D."/>
            <person name="White O."/>
            <person name="Clayton R.A."/>
            <person name="Kirkness E.F."/>
            <person name="Kerlavage A.R."/>
            <person name="Bult C.J."/>
            <person name="Tomb J.-F."/>
            <person name="Dougherty B.A."/>
            <person name="Merrick J.M."/>
            <person name="McKenney K."/>
            <person name="Sutton G.G."/>
            <person name="FitzHugh W."/>
            <person name="Fields C.A."/>
            <person name="Gocayne J.D."/>
            <person name="Scott J.D."/>
            <person name="Shirley R."/>
            <person name="Liu L.-I."/>
            <person name="Glodek A."/>
            <person name="Kelley J.M."/>
            <person name="Weidman J.F."/>
            <person name="Phillips C.A."/>
            <person name="Spriggs T."/>
            <person name="Hedblom E."/>
            <person name="Cotton M.D."/>
            <person name="Utterback T.R."/>
            <person name="Hanna M.C."/>
            <person name="Nguyen D.T."/>
            <person name="Saudek D.M."/>
            <person name="Brandon R.C."/>
            <person name="Fine L.D."/>
            <person name="Fritchman J.L."/>
            <person name="Fuhrmann J.L."/>
            <person name="Geoghagen N.S.M."/>
            <person name="Gnehm C.L."/>
            <person name="McDonald L.A."/>
            <person name="Small K.V."/>
            <person name="Fraser C.M."/>
            <person name="Smith H.O."/>
            <person name="Venter J.C."/>
        </authorList>
    </citation>
    <scope>NUCLEOTIDE SEQUENCE [LARGE SCALE GENOMIC DNA]</scope>
    <source>
        <strain>ATCC 51907 / DSM 11121 / KW20 / Rd</strain>
    </source>
</reference>
<keyword id="KW-1003">Cell membrane</keyword>
<keyword id="KW-0472">Membrane</keyword>
<keyword id="KW-1185">Reference proteome</keyword>
<keyword id="KW-0812">Transmembrane</keyword>
<keyword id="KW-1133">Transmembrane helix</keyword>
<proteinExistence type="predicted"/>
<accession>P44236</accession>
<evidence type="ECO:0000255" key="1"/>
<evidence type="ECO:0000256" key="2">
    <source>
        <dbReference type="SAM" id="MobiDB-lite"/>
    </source>
</evidence>
<evidence type="ECO:0000305" key="3"/>